<keyword id="KW-1185">Reference proteome</keyword>
<protein>
    <recommendedName>
        <fullName evidence="1">UPF0386 protein RHE_CH01859</fullName>
    </recommendedName>
</protein>
<organism>
    <name type="scientific">Rhizobium etli (strain ATCC 51251 / DSM 11541 / JCM 21823 / NBRC 15573 / CFN 42)</name>
    <dbReference type="NCBI Taxonomy" id="347834"/>
    <lineage>
        <taxon>Bacteria</taxon>
        <taxon>Pseudomonadati</taxon>
        <taxon>Pseudomonadota</taxon>
        <taxon>Alphaproteobacteria</taxon>
        <taxon>Hyphomicrobiales</taxon>
        <taxon>Rhizobiaceae</taxon>
        <taxon>Rhizobium/Agrobacterium group</taxon>
        <taxon>Rhizobium</taxon>
    </lineage>
</organism>
<name>Y1859_RHIEC</name>
<feature type="chain" id="PRO_0000252182" description="UPF0386 protein RHE_CH01859">
    <location>
        <begin position="1"/>
        <end position="85"/>
    </location>
</feature>
<comment type="similarity">
    <text evidence="1">Belongs to the UPF0386 family.</text>
</comment>
<accession>Q2K936</accession>
<evidence type="ECO:0000255" key="1">
    <source>
        <dbReference type="HAMAP-Rule" id="MF_00827"/>
    </source>
</evidence>
<reference key="1">
    <citation type="journal article" date="2006" name="Proc. Natl. Acad. Sci. U.S.A.">
        <title>The partitioned Rhizobium etli genome: genetic and metabolic redundancy in seven interacting replicons.</title>
        <authorList>
            <person name="Gonzalez V."/>
            <person name="Santamaria R.I."/>
            <person name="Bustos P."/>
            <person name="Hernandez-Gonzalez I."/>
            <person name="Medrano-Soto A."/>
            <person name="Moreno-Hagelsieb G."/>
            <person name="Janga S.C."/>
            <person name="Ramirez M.A."/>
            <person name="Jimenez-Jacinto V."/>
            <person name="Collado-Vides J."/>
            <person name="Davila G."/>
        </authorList>
    </citation>
    <scope>NUCLEOTIDE SEQUENCE [LARGE SCALE GENOMIC DNA]</scope>
    <source>
        <strain>ATCC 51251 / DSM 11541 / JCM 21823 / NBRC 15573 / CFN 42</strain>
    </source>
</reference>
<sequence length="85" mass="10013">MDISRTEQRILHLMAQGGRIEIIRDDNRKIENVSCFTRDGWLYPGVDLDLFRRLKRLKAIKSSGGQPYRITERGLRLVRSQLDNR</sequence>
<dbReference type="EMBL" id="CP000133">
    <property type="protein sequence ID" value="ABC90650.1"/>
    <property type="molecule type" value="Genomic_DNA"/>
</dbReference>
<dbReference type="RefSeq" id="WP_011425146.1">
    <property type="nucleotide sequence ID" value="NC_007761.1"/>
</dbReference>
<dbReference type="KEGG" id="ret:RHE_CH01859"/>
<dbReference type="eggNOG" id="COG3811">
    <property type="taxonomic scope" value="Bacteria"/>
</dbReference>
<dbReference type="HOGENOM" id="CLU_164736_0_0_5"/>
<dbReference type="OrthoDB" id="7204880at2"/>
<dbReference type="Proteomes" id="UP000001936">
    <property type="component" value="Chromosome"/>
</dbReference>
<dbReference type="HAMAP" id="MF_00827">
    <property type="entry name" value="UPF0386"/>
    <property type="match status" value="1"/>
</dbReference>
<dbReference type="InterPro" id="IPR018654">
    <property type="entry name" value="YjhX_toxin"/>
</dbReference>
<dbReference type="NCBIfam" id="NF010240">
    <property type="entry name" value="PRK13687.1"/>
    <property type="match status" value="1"/>
</dbReference>
<dbReference type="Pfam" id="PF09857">
    <property type="entry name" value="YjhX_toxin"/>
    <property type="match status" value="1"/>
</dbReference>
<gene>
    <name type="ordered locus">RHE_CH01859</name>
</gene>
<proteinExistence type="inferred from homology"/>